<comment type="function">
    <text evidence="1">Releases the supercoiling and torsional tension of DNA, which is introduced during the DNA replication and transcription, by transiently cleaving and rejoining one strand of the DNA duplex. Introduces a single-strand break via transesterification at a target site in duplex DNA. The scissile phosphodiester is attacked by the catalytic tyrosine of the enzyme, resulting in the formation of a DNA-(5'-phosphotyrosyl)-enzyme intermediate and the expulsion of a 3'-OH DNA strand. The free DNA strand then undergoes passage around the unbroken strand, thus removing DNA supercoils. Finally, in the religation step, the DNA 3'-OH attacks the covalent intermediate to expel the active-site tyrosine and restore the DNA phosphodiester backbone (By similarity).</text>
</comment>
<comment type="catalytic activity">
    <reaction evidence="2">
        <text>ATP-independent breakage of single-stranded DNA, followed by passage and rejoining.</text>
        <dbReference type="EC" id="5.6.2.1"/>
    </reaction>
</comment>
<comment type="subunit">
    <text evidence="1">Monomer.</text>
</comment>
<comment type="similarity">
    <text evidence="3">Belongs to the type IA topoisomerase family.</text>
</comment>
<proteinExistence type="inferred from homology"/>
<sequence length="18" mass="2043">ATGWSAFFIDGKWTEAKK</sequence>
<gene>
    <name type="primary">topA</name>
</gene>
<feature type="chain" id="PRO_0000145152" description="DNA topoisomerase 1">
    <location>
        <begin position="1" status="less than"/>
        <end position="18"/>
    </location>
</feature>
<feature type="non-terminal residue">
    <location>
        <position position="1"/>
    </location>
</feature>
<keyword id="KW-0238">DNA-binding</keyword>
<keyword id="KW-0413">Isomerase</keyword>
<keyword id="KW-0799">Topoisomerase</keyword>
<evidence type="ECO:0000250" key="1"/>
<evidence type="ECO:0000255" key="2">
    <source>
        <dbReference type="PROSITE-ProRule" id="PRU10131"/>
    </source>
</evidence>
<evidence type="ECO:0000305" key="3"/>
<dbReference type="EC" id="5.6.2.1" evidence="2"/>
<dbReference type="EMBL" id="X78729">
    <property type="status" value="NOT_ANNOTATED_CDS"/>
    <property type="molecule type" value="Genomic_DNA"/>
</dbReference>
<dbReference type="STRING" id="548.EAG7_01158"/>
<dbReference type="GO" id="GO:0003677">
    <property type="term" value="F:DNA binding"/>
    <property type="evidence" value="ECO:0007669"/>
    <property type="project" value="UniProtKB-KW"/>
</dbReference>
<dbReference type="GO" id="GO:0003917">
    <property type="term" value="F:DNA topoisomerase type I (single strand cut, ATP-independent) activity"/>
    <property type="evidence" value="ECO:0007669"/>
    <property type="project" value="UniProtKB-EC"/>
</dbReference>
<dbReference type="GO" id="GO:0006265">
    <property type="term" value="P:DNA topological change"/>
    <property type="evidence" value="ECO:0007669"/>
    <property type="project" value="InterPro"/>
</dbReference>
<dbReference type="InterPro" id="IPR013263">
    <property type="entry name" value="TopoI_Znr_bac"/>
</dbReference>
<dbReference type="Pfam" id="PF08272">
    <property type="entry name" value="Zn_Ribbon_Topo"/>
    <property type="match status" value="1"/>
</dbReference>
<protein>
    <recommendedName>
        <fullName>DNA topoisomerase 1</fullName>
        <ecNumber evidence="2">5.6.2.1</ecNumber>
    </recommendedName>
    <alternativeName>
        <fullName>DNA topoisomerase I</fullName>
    </alternativeName>
    <alternativeName>
        <fullName>Omega-protein</fullName>
    </alternativeName>
    <alternativeName>
        <fullName>Relaxing enzyme</fullName>
    </alternativeName>
    <alternativeName>
        <fullName>Swivelase</fullName>
    </alternativeName>
    <alternativeName>
        <fullName>Untwisting enzyme</fullName>
    </alternativeName>
</protein>
<organism>
    <name type="scientific">Klebsiella aerogenes</name>
    <name type="common">Enterobacter aerogenes</name>
    <dbReference type="NCBI Taxonomy" id="548"/>
    <lineage>
        <taxon>Bacteria</taxon>
        <taxon>Pseudomonadati</taxon>
        <taxon>Pseudomonadota</taxon>
        <taxon>Gammaproteobacteria</taxon>
        <taxon>Enterobacterales</taxon>
        <taxon>Enterobacteriaceae</taxon>
        <taxon>Klebsiella/Raoultella group</taxon>
        <taxon>Klebsiella</taxon>
    </lineage>
</organism>
<reference key="1">
    <citation type="journal article" date="1994" name="Biochem. J.">
        <title>Characterization of the CysB protein of Klebsiella aerogenes: direct evidence that N-acetylserine rather than O-acetylserine serves as the inducer of the cysteine regulon.</title>
        <authorList>
            <person name="Lynch A.S."/>
            <person name="Tyrrell R."/>
            <person name="Smerdon S.J."/>
            <person name="Briggs G.S."/>
            <person name="Wilkinson A.J."/>
        </authorList>
    </citation>
    <scope>NUCLEOTIDE SEQUENCE [GENOMIC DNA]</scope>
    <source>
        <strain>NCTC 418 / ATCC 15380</strain>
    </source>
</reference>
<accession>P46155</accession>
<name>TOP1_KLEAE</name>